<protein>
    <recommendedName>
        <fullName evidence="1">Deoxyuridine 5'-triphosphate nucleotidohydrolase</fullName>
        <shortName evidence="1">dUTPase</shortName>
        <ecNumber evidence="1">3.6.1.23</ecNumber>
    </recommendedName>
    <alternativeName>
        <fullName evidence="1">dUTP pyrophosphatase</fullName>
    </alternativeName>
</protein>
<gene>
    <name evidence="1" type="primary">dut</name>
    <name type="ordered locus">WS0800</name>
</gene>
<reference key="1">
    <citation type="journal article" date="2003" name="Proc. Natl. Acad. Sci. U.S.A.">
        <title>Complete genome sequence and analysis of Wolinella succinogenes.</title>
        <authorList>
            <person name="Baar C."/>
            <person name="Eppinger M."/>
            <person name="Raddatz G."/>
            <person name="Simon J."/>
            <person name="Lanz C."/>
            <person name="Klimmek O."/>
            <person name="Nandakumar R."/>
            <person name="Gross R."/>
            <person name="Rosinus A."/>
            <person name="Keller H."/>
            <person name="Jagtap P."/>
            <person name="Linke B."/>
            <person name="Meyer F."/>
            <person name="Lederer H."/>
            <person name="Schuster S.C."/>
        </authorList>
    </citation>
    <scope>NUCLEOTIDE SEQUENCE [LARGE SCALE GENOMIC DNA]</scope>
    <source>
        <strain>ATCC 29543 / DSM 1740 / CCUG 13145 / JCM 31913 / LMG 7466 / NCTC 11488 / FDC 602W</strain>
    </source>
</reference>
<keyword id="KW-0378">Hydrolase</keyword>
<keyword id="KW-0460">Magnesium</keyword>
<keyword id="KW-0479">Metal-binding</keyword>
<keyword id="KW-0546">Nucleotide metabolism</keyword>
<keyword id="KW-1185">Reference proteome</keyword>
<accession>Q7M9N1</accession>
<feature type="chain" id="PRO_0000182918" description="Deoxyuridine 5'-triphosphate nucleotidohydrolase">
    <location>
        <begin position="1"/>
        <end position="149"/>
    </location>
</feature>
<feature type="binding site" evidence="1">
    <location>
        <begin position="68"/>
        <end position="70"/>
    </location>
    <ligand>
        <name>substrate</name>
    </ligand>
</feature>
<feature type="binding site" evidence="1">
    <location>
        <position position="81"/>
    </location>
    <ligand>
        <name>substrate</name>
    </ligand>
</feature>
<feature type="binding site" evidence="1">
    <location>
        <begin position="85"/>
        <end position="87"/>
    </location>
    <ligand>
        <name>substrate</name>
    </ligand>
</feature>
<feature type="binding site" evidence="1">
    <location>
        <position position="95"/>
    </location>
    <ligand>
        <name>substrate</name>
    </ligand>
</feature>
<sequence length="149" mass="15679">MSELKKMKIRLLKLHPNAVIPAYQSAGAAGFDLCCVESLEIPPLGRALVSTGLALALEEGYELQIRPRSGLALKHGITVLNTPGTVDSDYRGEIKVILINLGAESFSIQAGDRIAQGVVSRLSIAELCEVESLDETARGAGGFGSTGKS</sequence>
<comment type="function">
    <text evidence="1">This enzyme is involved in nucleotide metabolism: it produces dUMP, the immediate precursor of thymidine nucleotides and it decreases the intracellular concentration of dUTP so that uracil cannot be incorporated into DNA.</text>
</comment>
<comment type="catalytic activity">
    <reaction evidence="1">
        <text>dUTP + H2O = dUMP + diphosphate + H(+)</text>
        <dbReference type="Rhea" id="RHEA:10248"/>
        <dbReference type="ChEBI" id="CHEBI:15377"/>
        <dbReference type="ChEBI" id="CHEBI:15378"/>
        <dbReference type="ChEBI" id="CHEBI:33019"/>
        <dbReference type="ChEBI" id="CHEBI:61555"/>
        <dbReference type="ChEBI" id="CHEBI:246422"/>
        <dbReference type="EC" id="3.6.1.23"/>
    </reaction>
</comment>
<comment type="cofactor">
    <cofactor evidence="1">
        <name>Mg(2+)</name>
        <dbReference type="ChEBI" id="CHEBI:18420"/>
    </cofactor>
</comment>
<comment type="pathway">
    <text evidence="1">Pyrimidine metabolism; dUMP biosynthesis; dUMP from dCTP (dUTP route): step 2/2.</text>
</comment>
<comment type="similarity">
    <text evidence="1">Belongs to the dUTPase family.</text>
</comment>
<proteinExistence type="inferred from homology"/>
<organism>
    <name type="scientific">Wolinella succinogenes (strain ATCC 29543 / DSM 1740 / CCUG 13145 / JCM 31913 / LMG 7466 / NCTC 11488 / FDC 602W)</name>
    <name type="common">Vibrio succinogenes</name>
    <dbReference type="NCBI Taxonomy" id="273121"/>
    <lineage>
        <taxon>Bacteria</taxon>
        <taxon>Pseudomonadati</taxon>
        <taxon>Campylobacterota</taxon>
        <taxon>Epsilonproteobacteria</taxon>
        <taxon>Campylobacterales</taxon>
        <taxon>Helicobacteraceae</taxon>
        <taxon>Wolinella</taxon>
    </lineage>
</organism>
<name>DUT_WOLSU</name>
<evidence type="ECO:0000255" key="1">
    <source>
        <dbReference type="HAMAP-Rule" id="MF_00116"/>
    </source>
</evidence>
<dbReference type="EC" id="3.6.1.23" evidence="1"/>
<dbReference type="EMBL" id="BX571659">
    <property type="protein sequence ID" value="CAE09913.1"/>
    <property type="molecule type" value="Genomic_DNA"/>
</dbReference>
<dbReference type="SMR" id="Q7M9N1"/>
<dbReference type="STRING" id="273121.WS0800"/>
<dbReference type="KEGG" id="wsu:WS0800"/>
<dbReference type="eggNOG" id="COG0756">
    <property type="taxonomic scope" value="Bacteria"/>
</dbReference>
<dbReference type="HOGENOM" id="CLU_068508_1_0_7"/>
<dbReference type="UniPathway" id="UPA00610">
    <property type="reaction ID" value="UER00666"/>
</dbReference>
<dbReference type="Proteomes" id="UP000000422">
    <property type="component" value="Chromosome"/>
</dbReference>
<dbReference type="GO" id="GO:0004170">
    <property type="term" value="F:dUTP diphosphatase activity"/>
    <property type="evidence" value="ECO:0007669"/>
    <property type="project" value="UniProtKB-UniRule"/>
</dbReference>
<dbReference type="GO" id="GO:0000287">
    <property type="term" value="F:magnesium ion binding"/>
    <property type="evidence" value="ECO:0007669"/>
    <property type="project" value="UniProtKB-UniRule"/>
</dbReference>
<dbReference type="GO" id="GO:0006226">
    <property type="term" value="P:dUMP biosynthetic process"/>
    <property type="evidence" value="ECO:0007669"/>
    <property type="project" value="UniProtKB-UniRule"/>
</dbReference>
<dbReference type="GO" id="GO:0046081">
    <property type="term" value="P:dUTP catabolic process"/>
    <property type="evidence" value="ECO:0007669"/>
    <property type="project" value="InterPro"/>
</dbReference>
<dbReference type="CDD" id="cd07557">
    <property type="entry name" value="trimeric_dUTPase"/>
    <property type="match status" value="1"/>
</dbReference>
<dbReference type="Gene3D" id="2.70.40.10">
    <property type="match status" value="1"/>
</dbReference>
<dbReference type="HAMAP" id="MF_00116">
    <property type="entry name" value="dUTPase_bact"/>
    <property type="match status" value="1"/>
</dbReference>
<dbReference type="InterPro" id="IPR008181">
    <property type="entry name" value="dUTPase"/>
</dbReference>
<dbReference type="InterPro" id="IPR029054">
    <property type="entry name" value="dUTPase-like"/>
</dbReference>
<dbReference type="InterPro" id="IPR036157">
    <property type="entry name" value="dUTPase-like_sf"/>
</dbReference>
<dbReference type="InterPro" id="IPR033704">
    <property type="entry name" value="dUTPase_trimeric"/>
</dbReference>
<dbReference type="NCBIfam" id="TIGR00576">
    <property type="entry name" value="dut"/>
    <property type="match status" value="1"/>
</dbReference>
<dbReference type="NCBIfam" id="NF001862">
    <property type="entry name" value="PRK00601.1"/>
    <property type="match status" value="1"/>
</dbReference>
<dbReference type="PANTHER" id="PTHR11241">
    <property type="entry name" value="DEOXYURIDINE 5'-TRIPHOSPHATE NUCLEOTIDOHYDROLASE"/>
    <property type="match status" value="1"/>
</dbReference>
<dbReference type="PANTHER" id="PTHR11241:SF0">
    <property type="entry name" value="DEOXYURIDINE 5'-TRIPHOSPHATE NUCLEOTIDOHYDROLASE"/>
    <property type="match status" value="1"/>
</dbReference>
<dbReference type="Pfam" id="PF00692">
    <property type="entry name" value="dUTPase"/>
    <property type="match status" value="1"/>
</dbReference>
<dbReference type="SUPFAM" id="SSF51283">
    <property type="entry name" value="dUTPase-like"/>
    <property type="match status" value="1"/>
</dbReference>